<keyword id="KW-0963">Cytoplasm</keyword>
<keyword id="KW-0251">Elongation factor</keyword>
<keyword id="KW-0648">Protein biosynthesis</keyword>
<keyword id="KW-1185">Reference proteome</keyword>
<evidence type="ECO:0000255" key="1">
    <source>
        <dbReference type="HAMAP-Rule" id="MF_00141"/>
    </source>
</evidence>
<name>EFP_AGRFC</name>
<feature type="chain" id="PRO_0000094185" description="Elongation factor P">
    <location>
        <begin position="1"/>
        <end position="189"/>
    </location>
</feature>
<dbReference type="EMBL" id="AE007869">
    <property type="protein sequence ID" value="AAK88278.1"/>
    <property type="molecule type" value="Genomic_DNA"/>
</dbReference>
<dbReference type="PIR" id="AH2889">
    <property type="entry name" value="AH2889"/>
</dbReference>
<dbReference type="PIR" id="E97665">
    <property type="entry name" value="E97665"/>
</dbReference>
<dbReference type="RefSeq" id="NP_355493.1">
    <property type="nucleotide sequence ID" value="NC_003062.2"/>
</dbReference>
<dbReference type="RefSeq" id="WP_006313960.1">
    <property type="nucleotide sequence ID" value="NC_003062.2"/>
</dbReference>
<dbReference type="SMR" id="P0A3B5"/>
<dbReference type="STRING" id="176299.Atu2553"/>
<dbReference type="EnsemblBacteria" id="AAK88278">
    <property type="protein sequence ID" value="AAK88278"/>
    <property type="gene ID" value="Atu2553"/>
</dbReference>
<dbReference type="GeneID" id="1134591"/>
<dbReference type="KEGG" id="atu:Atu2553"/>
<dbReference type="PATRIC" id="fig|176299.10.peg.2557"/>
<dbReference type="eggNOG" id="COG0231">
    <property type="taxonomic scope" value="Bacteria"/>
</dbReference>
<dbReference type="HOGENOM" id="CLU_074944_1_1_5"/>
<dbReference type="OrthoDB" id="9801844at2"/>
<dbReference type="PhylomeDB" id="P0A3B5"/>
<dbReference type="BioCyc" id="AGRO:ATU2553-MONOMER"/>
<dbReference type="UniPathway" id="UPA00345"/>
<dbReference type="Proteomes" id="UP000000813">
    <property type="component" value="Chromosome circular"/>
</dbReference>
<dbReference type="GO" id="GO:0005737">
    <property type="term" value="C:cytoplasm"/>
    <property type="evidence" value="ECO:0007669"/>
    <property type="project" value="UniProtKB-SubCell"/>
</dbReference>
<dbReference type="GO" id="GO:0003746">
    <property type="term" value="F:translation elongation factor activity"/>
    <property type="evidence" value="ECO:0007669"/>
    <property type="project" value="UniProtKB-UniRule"/>
</dbReference>
<dbReference type="GO" id="GO:0043043">
    <property type="term" value="P:peptide biosynthetic process"/>
    <property type="evidence" value="ECO:0007669"/>
    <property type="project" value="InterPro"/>
</dbReference>
<dbReference type="CDD" id="cd04470">
    <property type="entry name" value="S1_EF-P_repeat_1"/>
    <property type="match status" value="1"/>
</dbReference>
<dbReference type="CDD" id="cd05794">
    <property type="entry name" value="S1_EF-P_repeat_2"/>
    <property type="match status" value="1"/>
</dbReference>
<dbReference type="FunFam" id="2.40.50.140:FF:000004">
    <property type="entry name" value="Elongation factor P"/>
    <property type="match status" value="1"/>
</dbReference>
<dbReference type="FunFam" id="2.40.50.140:FF:000009">
    <property type="entry name" value="Elongation factor P"/>
    <property type="match status" value="1"/>
</dbReference>
<dbReference type="Gene3D" id="2.30.30.30">
    <property type="match status" value="1"/>
</dbReference>
<dbReference type="Gene3D" id="2.40.50.140">
    <property type="entry name" value="Nucleic acid-binding proteins"/>
    <property type="match status" value="2"/>
</dbReference>
<dbReference type="HAMAP" id="MF_00141">
    <property type="entry name" value="EF_P"/>
    <property type="match status" value="1"/>
</dbReference>
<dbReference type="InterPro" id="IPR015365">
    <property type="entry name" value="Elong-fact-P_C"/>
</dbReference>
<dbReference type="InterPro" id="IPR012340">
    <property type="entry name" value="NA-bd_OB-fold"/>
</dbReference>
<dbReference type="InterPro" id="IPR014722">
    <property type="entry name" value="Rib_uL2_dom2"/>
</dbReference>
<dbReference type="InterPro" id="IPR020599">
    <property type="entry name" value="Transl_elong_fac_P/YeiP"/>
</dbReference>
<dbReference type="InterPro" id="IPR013185">
    <property type="entry name" value="Transl_elong_KOW-like"/>
</dbReference>
<dbReference type="InterPro" id="IPR001059">
    <property type="entry name" value="Transl_elong_P/YeiP_cen"/>
</dbReference>
<dbReference type="InterPro" id="IPR013852">
    <property type="entry name" value="Transl_elong_P/YeiP_CS"/>
</dbReference>
<dbReference type="InterPro" id="IPR011768">
    <property type="entry name" value="Transl_elongation_fac_P"/>
</dbReference>
<dbReference type="InterPro" id="IPR008991">
    <property type="entry name" value="Translation_prot_SH3-like_sf"/>
</dbReference>
<dbReference type="NCBIfam" id="TIGR00038">
    <property type="entry name" value="efp"/>
    <property type="match status" value="1"/>
</dbReference>
<dbReference type="NCBIfam" id="NF001810">
    <property type="entry name" value="PRK00529.1"/>
    <property type="match status" value="1"/>
</dbReference>
<dbReference type="PANTHER" id="PTHR30053">
    <property type="entry name" value="ELONGATION FACTOR P"/>
    <property type="match status" value="1"/>
</dbReference>
<dbReference type="PANTHER" id="PTHR30053:SF14">
    <property type="entry name" value="TRANSLATION ELONGATION FACTOR KOW-LIKE DOMAIN-CONTAINING PROTEIN"/>
    <property type="match status" value="1"/>
</dbReference>
<dbReference type="Pfam" id="PF01132">
    <property type="entry name" value="EFP"/>
    <property type="match status" value="1"/>
</dbReference>
<dbReference type="Pfam" id="PF08207">
    <property type="entry name" value="EFP_N"/>
    <property type="match status" value="1"/>
</dbReference>
<dbReference type="Pfam" id="PF09285">
    <property type="entry name" value="Elong-fact-P_C"/>
    <property type="match status" value="1"/>
</dbReference>
<dbReference type="PIRSF" id="PIRSF005901">
    <property type="entry name" value="EF-P"/>
    <property type="match status" value="1"/>
</dbReference>
<dbReference type="SMART" id="SM01185">
    <property type="entry name" value="EFP"/>
    <property type="match status" value="1"/>
</dbReference>
<dbReference type="SMART" id="SM00841">
    <property type="entry name" value="Elong-fact-P_C"/>
    <property type="match status" value="1"/>
</dbReference>
<dbReference type="SUPFAM" id="SSF50249">
    <property type="entry name" value="Nucleic acid-binding proteins"/>
    <property type="match status" value="2"/>
</dbReference>
<dbReference type="SUPFAM" id="SSF50104">
    <property type="entry name" value="Translation proteins SH3-like domain"/>
    <property type="match status" value="1"/>
</dbReference>
<dbReference type="PROSITE" id="PS01275">
    <property type="entry name" value="EFP"/>
    <property type="match status" value="1"/>
</dbReference>
<accession>P0A3B5</accession>
<accession>Q9F113</accession>
<reference key="1">
    <citation type="journal article" date="2001" name="Science">
        <title>The genome of the natural genetic engineer Agrobacterium tumefaciens C58.</title>
        <authorList>
            <person name="Wood D.W."/>
            <person name="Setubal J.C."/>
            <person name="Kaul R."/>
            <person name="Monks D.E."/>
            <person name="Kitajima J.P."/>
            <person name="Okura V.K."/>
            <person name="Zhou Y."/>
            <person name="Chen L."/>
            <person name="Wood G.E."/>
            <person name="Almeida N.F. Jr."/>
            <person name="Woo L."/>
            <person name="Chen Y."/>
            <person name="Paulsen I.T."/>
            <person name="Eisen J.A."/>
            <person name="Karp P.D."/>
            <person name="Bovee D. Sr."/>
            <person name="Chapman P."/>
            <person name="Clendenning J."/>
            <person name="Deatherage G."/>
            <person name="Gillet W."/>
            <person name="Grant C."/>
            <person name="Kutyavin T."/>
            <person name="Levy R."/>
            <person name="Li M.-J."/>
            <person name="McClelland E."/>
            <person name="Palmieri A."/>
            <person name="Raymond C."/>
            <person name="Rouse G."/>
            <person name="Saenphimmachak C."/>
            <person name="Wu Z."/>
            <person name="Romero P."/>
            <person name="Gordon D."/>
            <person name="Zhang S."/>
            <person name="Yoo H."/>
            <person name="Tao Y."/>
            <person name="Biddle P."/>
            <person name="Jung M."/>
            <person name="Krespan W."/>
            <person name="Perry M."/>
            <person name="Gordon-Kamm B."/>
            <person name="Liao L."/>
            <person name="Kim S."/>
            <person name="Hendrick C."/>
            <person name="Zhao Z.-Y."/>
            <person name="Dolan M."/>
            <person name="Chumley F."/>
            <person name="Tingey S.V."/>
            <person name="Tomb J.-F."/>
            <person name="Gordon M.P."/>
            <person name="Olson M.V."/>
            <person name="Nester E.W."/>
        </authorList>
    </citation>
    <scope>NUCLEOTIDE SEQUENCE [LARGE SCALE GENOMIC DNA]</scope>
    <source>
        <strain>C58 / ATCC 33970</strain>
    </source>
</reference>
<reference key="2">
    <citation type="journal article" date="2001" name="Science">
        <title>Genome sequence of the plant pathogen and biotechnology agent Agrobacterium tumefaciens C58.</title>
        <authorList>
            <person name="Goodner B."/>
            <person name="Hinkle G."/>
            <person name="Gattung S."/>
            <person name="Miller N."/>
            <person name="Blanchard M."/>
            <person name="Qurollo B."/>
            <person name="Goldman B.S."/>
            <person name="Cao Y."/>
            <person name="Askenazi M."/>
            <person name="Halling C."/>
            <person name="Mullin L."/>
            <person name="Houmiel K."/>
            <person name="Gordon J."/>
            <person name="Vaudin M."/>
            <person name="Iartchouk O."/>
            <person name="Epp A."/>
            <person name="Liu F."/>
            <person name="Wollam C."/>
            <person name="Allinger M."/>
            <person name="Doughty D."/>
            <person name="Scott C."/>
            <person name="Lappas C."/>
            <person name="Markelz B."/>
            <person name="Flanagan C."/>
            <person name="Crowell C."/>
            <person name="Gurson J."/>
            <person name="Lomo C."/>
            <person name="Sear C."/>
            <person name="Strub G."/>
            <person name="Cielo C."/>
            <person name="Slater S."/>
        </authorList>
    </citation>
    <scope>NUCLEOTIDE SEQUENCE [LARGE SCALE GENOMIC DNA]</scope>
    <source>
        <strain>C58 / ATCC 33970</strain>
    </source>
</reference>
<organism>
    <name type="scientific">Agrobacterium fabrum (strain C58 / ATCC 33970)</name>
    <name type="common">Agrobacterium tumefaciens (strain C58)</name>
    <dbReference type="NCBI Taxonomy" id="176299"/>
    <lineage>
        <taxon>Bacteria</taxon>
        <taxon>Pseudomonadati</taxon>
        <taxon>Pseudomonadota</taxon>
        <taxon>Alphaproteobacteria</taxon>
        <taxon>Hyphomicrobiales</taxon>
        <taxon>Rhizobiaceae</taxon>
        <taxon>Rhizobium/Agrobacterium group</taxon>
        <taxon>Agrobacterium</taxon>
        <taxon>Agrobacterium tumefaciens complex</taxon>
    </lineage>
</organism>
<gene>
    <name evidence="1" type="primary">efp</name>
    <name type="synonym">chvH</name>
    <name type="ordered locus">Atu2553</name>
    <name type="ORF">AGR_C_4625</name>
</gene>
<comment type="function">
    <text evidence="1">Involved in peptide bond synthesis. Stimulates efficient translation and peptide-bond synthesis on native or reconstituted 70S ribosomes in vitro. Probably functions indirectly by altering the affinity of the ribosome for aminoacyl-tRNA, thus increasing their reactivity as acceptors for peptidyl transferase.</text>
</comment>
<comment type="pathway">
    <text evidence="1">Protein biosynthesis; polypeptide chain elongation.</text>
</comment>
<comment type="subcellular location">
    <subcellularLocation>
        <location evidence="1">Cytoplasm</location>
    </subcellularLocation>
</comment>
<comment type="similarity">
    <text evidence="1">Belongs to the elongation factor P family.</text>
</comment>
<sequence length="189" mass="21106">MVKVIASSVRKGNVLDVDGKLYVVLTAQNFHPGKGTPVTQVDMRRIVDGTKVSERWRTTEQVERAFVEDLNFQFLYEDGEGFHFMNPENYDQVVVDVETMGDQKAYLQEGMTCVLSIHEGNPLAVELPRHVTLEIVETEPVVKGQTASSSYKPAILSNGIRTMVPPHIDAGIRVVIATEDNSYVERAKN</sequence>
<protein>
    <recommendedName>
        <fullName evidence="1">Elongation factor P</fullName>
        <shortName evidence="1">EF-P</shortName>
    </recommendedName>
</protein>
<proteinExistence type="inferred from homology"/>